<evidence type="ECO:0000250" key="1"/>
<evidence type="ECO:0000255" key="2"/>
<evidence type="ECO:0000269" key="3">
    <source>
    </source>
</evidence>
<evidence type="ECO:0000305" key="4"/>
<sequence length="152" mass="17572">MKHPFPQFPPILVIYCFCMLQIPSSGASPPLAGPPDGLDAVDPERLAHFLNQRETCSNQPKESRDVYKRFLFHYSRAWKSTHPVNSEFAPVHPLMRLAAKLPSRRMKRLPRLLHTDSRMATIDFPKKDPTTSLGRPFFLFRPRNGRYTDKVQ</sequence>
<reference key="1">
    <citation type="journal article" date="2005" name="EMBO J.">
        <title>Identification of neuromedin S and its possible role in the mammalian circadian oscillator system.</title>
        <authorList>
            <person name="Mori K."/>
            <person name="Miyazato M."/>
            <person name="Ida T."/>
            <person name="Murakami N."/>
            <person name="Serino R."/>
            <person name="Ueta Y."/>
            <person name="Kojima M."/>
            <person name="Kangawa K."/>
        </authorList>
    </citation>
    <scope>NUCLEOTIDE SEQUENCE [MRNA]</scope>
    <scope>PROTEIN SEQUENCE OF 109-144</scope>
    <scope>FUNCTION</scope>
    <scope>TISSUE SPECIFICITY</scope>
    <scope>INDUCTION</scope>
    <scope>PROTEOLYTIC PROCESSING</scope>
    <source>
        <tissue>Brain</tissue>
    </source>
</reference>
<proteinExistence type="evidence at protein level"/>
<protein>
    <recommendedName>
        <fullName>Neuromedin-S</fullName>
    </recommendedName>
</protein>
<dbReference type="EMBL" id="AB164465">
    <property type="protein sequence ID" value="BAD89025.1"/>
    <property type="molecule type" value="mRNA"/>
</dbReference>
<dbReference type="RefSeq" id="NP_001012233.1">
    <property type="nucleotide sequence ID" value="NM_001012233.1"/>
</dbReference>
<dbReference type="FunCoup" id="Q5H8A2">
    <property type="interactions" value="1"/>
</dbReference>
<dbReference type="STRING" id="10116.ENSRNOP00000056345"/>
<dbReference type="PaxDb" id="10116-ENSRNOP00000056345"/>
<dbReference type="Ensembl" id="ENSRNOT00000059587.3">
    <property type="protein sequence ID" value="ENSRNOP00000056345.2"/>
    <property type="gene ID" value="ENSRNOG00000038979.3"/>
</dbReference>
<dbReference type="GeneID" id="497196"/>
<dbReference type="KEGG" id="rno:497196"/>
<dbReference type="UCSC" id="RGD:1359122">
    <property type="organism name" value="rat"/>
</dbReference>
<dbReference type="AGR" id="RGD:1359122"/>
<dbReference type="CTD" id="129521"/>
<dbReference type="RGD" id="1359122">
    <property type="gene designation" value="NMS"/>
</dbReference>
<dbReference type="eggNOG" id="ENOG502SB16">
    <property type="taxonomic scope" value="Eukaryota"/>
</dbReference>
<dbReference type="GeneTree" id="ENSGT00510000049213"/>
<dbReference type="HOGENOM" id="CLU_090356_1_0_1"/>
<dbReference type="InParanoid" id="Q5H8A2"/>
<dbReference type="OMA" id="FCMLPIP"/>
<dbReference type="OrthoDB" id="9940794at2759"/>
<dbReference type="PhylomeDB" id="Q5H8A2"/>
<dbReference type="Reactome" id="R-RNO-375276">
    <property type="pathway name" value="Peptide ligand-binding receptors"/>
</dbReference>
<dbReference type="Reactome" id="R-RNO-416476">
    <property type="pathway name" value="G alpha (q) signalling events"/>
</dbReference>
<dbReference type="Reactome" id="R-RNO-418594">
    <property type="pathway name" value="G alpha (i) signalling events"/>
</dbReference>
<dbReference type="PRO" id="PR:Q5H8A2"/>
<dbReference type="Proteomes" id="UP000002494">
    <property type="component" value="Chromosome 9"/>
</dbReference>
<dbReference type="Bgee" id="ENSRNOG00000038979">
    <property type="expression patterns" value="Expressed in testis"/>
</dbReference>
<dbReference type="ExpressionAtlas" id="Q5H8A2">
    <property type="expression patterns" value="baseline and differential"/>
</dbReference>
<dbReference type="GO" id="GO:0005576">
    <property type="term" value="C:extracellular region"/>
    <property type="evidence" value="ECO:0007669"/>
    <property type="project" value="UniProtKB-SubCell"/>
</dbReference>
<dbReference type="GO" id="GO:0001664">
    <property type="term" value="F:G protein-coupled receptor binding"/>
    <property type="evidence" value="ECO:0000314"/>
    <property type="project" value="MGI"/>
</dbReference>
<dbReference type="GO" id="GO:0045475">
    <property type="term" value="P:locomotor rhythm"/>
    <property type="evidence" value="ECO:0000314"/>
    <property type="project" value="MGI"/>
</dbReference>
<dbReference type="GO" id="GO:0007218">
    <property type="term" value="P:neuropeptide signaling pathway"/>
    <property type="evidence" value="ECO:0000314"/>
    <property type="project" value="MGI"/>
</dbReference>
<dbReference type="InterPro" id="IPR018070">
    <property type="entry name" value="Neuromedin-U_amidation-site"/>
</dbReference>
<dbReference type="InterPro" id="IPR043253">
    <property type="entry name" value="NmS"/>
</dbReference>
<dbReference type="PANTHER" id="PTHR32414">
    <property type="entry name" value="NEUROMEDIN-S"/>
    <property type="match status" value="1"/>
</dbReference>
<dbReference type="PANTHER" id="PTHR32414:SF2">
    <property type="entry name" value="NEUROMEDIN-S"/>
    <property type="match status" value="1"/>
</dbReference>
<dbReference type="PROSITE" id="PS00967">
    <property type="entry name" value="NMU"/>
    <property type="match status" value="1"/>
</dbReference>
<gene>
    <name type="primary">Nms</name>
</gene>
<feature type="signal peptide" evidence="2">
    <location>
        <begin position="1"/>
        <end position="26"/>
    </location>
</feature>
<feature type="propeptide" id="PRO_0000262490">
    <location>
        <begin position="27"/>
        <end position="69"/>
    </location>
</feature>
<feature type="propeptide" id="PRO_0000262491">
    <location>
        <begin position="70"/>
        <end position="105"/>
    </location>
</feature>
<feature type="propeptide" id="PRO_0000262492" evidence="3">
    <location>
        <begin position="106"/>
        <end position="108"/>
    </location>
</feature>
<feature type="peptide" id="PRO_0000262493" description="Neuromedin-S">
    <location>
        <begin position="109"/>
        <end position="144"/>
    </location>
</feature>
<feature type="propeptide" id="PRO_0000262494">
    <location>
        <begin position="147"/>
        <end position="152"/>
    </location>
</feature>
<feature type="modified residue" description="Asparagine amide" evidence="1">
    <location>
        <position position="144"/>
    </location>
</feature>
<comment type="function">
    <text evidence="3">Implicated in the regulation of circadian rhythms through autocrine and/or paracrine actions. Stimulates the contraction of rectum and elevation of blood pressure.</text>
</comment>
<comment type="subcellular location">
    <subcellularLocation>
        <location evidence="1">Secreted</location>
    </subcellularLocation>
</comment>
<comment type="tissue specificity">
    <text evidence="3">Expressed in the CNS, spleen and testis. Specifically expressed in the suprachiasmatic nuclei (SCN) of the hypothalamus.</text>
</comment>
<comment type="induction">
    <text evidence="3">Expression has a diurnal peak under light/dark cycling, but remains stable under constant darkness.</text>
</comment>
<comment type="similarity">
    <text evidence="4">Belongs to the NmU family.</text>
</comment>
<keyword id="KW-0027">Amidation</keyword>
<keyword id="KW-0165">Cleavage on pair of basic residues</keyword>
<keyword id="KW-0903">Direct protein sequencing</keyword>
<keyword id="KW-0527">Neuropeptide</keyword>
<keyword id="KW-1185">Reference proteome</keyword>
<keyword id="KW-0964">Secreted</keyword>
<keyword id="KW-0732">Signal</keyword>
<organism>
    <name type="scientific">Rattus norvegicus</name>
    <name type="common">Rat</name>
    <dbReference type="NCBI Taxonomy" id="10116"/>
    <lineage>
        <taxon>Eukaryota</taxon>
        <taxon>Metazoa</taxon>
        <taxon>Chordata</taxon>
        <taxon>Craniata</taxon>
        <taxon>Vertebrata</taxon>
        <taxon>Euteleostomi</taxon>
        <taxon>Mammalia</taxon>
        <taxon>Eutheria</taxon>
        <taxon>Euarchontoglires</taxon>
        <taxon>Glires</taxon>
        <taxon>Rodentia</taxon>
        <taxon>Myomorpha</taxon>
        <taxon>Muroidea</taxon>
        <taxon>Muridae</taxon>
        <taxon>Murinae</taxon>
        <taxon>Rattus</taxon>
    </lineage>
</organism>
<name>NMS_RAT</name>
<accession>Q5H8A2</accession>